<accession>A4T5Z9</accession>
<evidence type="ECO:0000255" key="1">
    <source>
        <dbReference type="HAMAP-Rule" id="MF_00537"/>
    </source>
</evidence>
<evidence type="ECO:0000256" key="2">
    <source>
        <dbReference type="SAM" id="MobiDB-lite"/>
    </source>
</evidence>
<evidence type="ECO:0000305" key="3"/>
<sequence>MAKNSKIVKNERRLVLVARHAERRAELKAIISSPSTPADARAAAQSELNRQPRDASPVRVRNRDAVDGRPRGHLRKFGLSRMRVRELAHRGQLPGVRKSSW</sequence>
<name>RS14_MYCGI</name>
<feature type="chain" id="PRO_1000128454" description="Small ribosomal subunit protein uS14A">
    <location>
        <begin position="1"/>
        <end position="101"/>
    </location>
</feature>
<feature type="region of interest" description="Disordered" evidence="2">
    <location>
        <begin position="29"/>
        <end position="73"/>
    </location>
</feature>
<feature type="compositionally biased region" description="Basic and acidic residues" evidence="2">
    <location>
        <begin position="61"/>
        <end position="70"/>
    </location>
</feature>
<keyword id="KW-0687">Ribonucleoprotein</keyword>
<keyword id="KW-0689">Ribosomal protein</keyword>
<keyword id="KW-0694">RNA-binding</keyword>
<keyword id="KW-0699">rRNA-binding</keyword>
<organism>
    <name type="scientific">Mycolicibacterium gilvum (strain PYR-GCK)</name>
    <name type="common">Mycobacterium gilvum (strain PYR-GCK)</name>
    <dbReference type="NCBI Taxonomy" id="350054"/>
    <lineage>
        <taxon>Bacteria</taxon>
        <taxon>Bacillati</taxon>
        <taxon>Actinomycetota</taxon>
        <taxon>Actinomycetes</taxon>
        <taxon>Mycobacteriales</taxon>
        <taxon>Mycobacteriaceae</taxon>
        <taxon>Mycolicibacterium</taxon>
    </lineage>
</organism>
<reference key="1">
    <citation type="submission" date="2007-04" db="EMBL/GenBank/DDBJ databases">
        <title>Complete sequence of chromosome of Mycobacterium gilvum PYR-GCK.</title>
        <authorList>
            <consortium name="US DOE Joint Genome Institute"/>
            <person name="Copeland A."/>
            <person name="Lucas S."/>
            <person name="Lapidus A."/>
            <person name="Barry K."/>
            <person name="Detter J.C."/>
            <person name="Glavina del Rio T."/>
            <person name="Hammon N."/>
            <person name="Israni S."/>
            <person name="Dalin E."/>
            <person name="Tice H."/>
            <person name="Pitluck S."/>
            <person name="Chain P."/>
            <person name="Malfatti S."/>
            <person name="Shin M."/>
            <person name="Vergez L."/>
            <person name="Schmutz J."/>
            <person name="Larimer F."/>
            <person name="Land M."/>
            <person name="Hauser L."/>
            <person name="Kyrpides N."/>
            <person name="Mikhailova N."/>
            <person name="Miller C."/>
            <person name="Richardson P."/>
        </authorList>
    </citation>
    <scope>NUCLEOTIDE SEQUENCE [LARGE SCALE GENOMIC DNA]</scope>
    <source>
        <strain>PYR-GCK</strain>
    </source>
</reference>
<dbReference type="EMBL" id="CP000656">
    <property type="protein sequence ID" value="ABP43792.1"/>
    <property type="molecule type" value="Genomic_DNA"/>
</dbReference>
<dbReference type="SMR" id="A4T5Z9"/>
<dbReference type="STRING" id="350054.Mflv_1310"/>
<dbReference type="KEGG" id="mgi:Mflv_1310"/>
<dbReference type="eggNOG" id="COG0199">
    <property type="taxonomic scope" value="Bacteria"/>
</dbReference>
<dbReference type="HOGENOM" id="CLU_139869_0_1_11"/>
<dbReference type="OrthoDB" id="9810484at2"/>
<dbReference type="GO" id="GO:0015935">
    <property type="term" value="C:small ribosomal subunit"/>
    <property type="evidence" value="ECO:0007669"/>
    <property type="project" value="TreeGrafter"/>
</dbReference>
<dbReference type="GO" id="GO:0019843">
    <property type="term" value="F:rRNA binding"/>
    <property type="evidence" value="ECO:0007669"/>
    <property type="project" value="UniProtKB-UniRule"/>
</dbReference>
<dbReference type="GO" id="GO:0003735">
    <property type="term" value="F:structural constituent of ribosome"/>
    <property type="evidence" value="ECO:0007669"/>
    <property type="project" value="InterPro"/>
</dbReference>
<dbReference type="GO" id="GO:0006412">
    <property type="term" value="P:translation"/>
    <property type="evidence" value="ECO:0007669"/>
    <property type="project" value="UniProtKB-UniRule"/>
</dbReference>
<dbReference type="FunFam" id="1.10.287.1480:FF:000001">
    <property type="entry name" value="30S ribosomal protein S14"/>
    <property type="match status" value="1"/>
</dbReference>
<dbReference type="Gene3D" id="1.10.287.1480">
    <property type="match status" value="1"/>
</dbReference>
<dbReference type="HAMAP" id="MF_00537">
    <property type="entry name" value="Ribosomal_uS14_1"/>
    <property type="match status" value="1"/>
</dbReference>
<dbReference type="InterPro" id="IPR001209">
    <property type="entry name" value="Ribosomal_uS14"/>
</dbReference>
<dbReference type="InterPro" id="IPR023036">
    <property type="entry name" value="Ribosomal_uS14_bac/plastid"/>
</dbReference>
<dbReference type="NCBIfam" id="NF006477">
    <property type="entry name" value="PRK08881.1"/>
    <property type="match status" value="1"/>
</dbReference>
<dbReference type="PANTHER" id="PTHR19836">
    <property type="entry name" value="30S RIBOSOMAL PROTEIN S14"/>
    <property type="match status" value="1"/>
</dbReference>
<dbReference type="PANTHER" id="PTHR19836:SF23">
    <property type="entry name" value="SMALL RIBOSOMAL SUBUNIT PROTEIN US14A"/>
    <property type="match status" value="1"/>
</dbReference>
<dbReference type="Pfam" id="PF00253">
    <property type="entry name" value="Ribosomal_S14"/>
    <property type="match status" value="1"/>
</dbReference>
<dbReference type="SUPFAM" id="SSF57716">
    <property type="entry name" value="Glucocorticoid receptor-like (DNA-binding domain)"/>
    <property type="match status" value="1"/>
</dbReference>
<protein>
    <recommendedName>
        <fullName evidence="1">Small ribosomal subunit protein uS14A</fullName>
    </recommendedName>
    <alternativeName>
        <fullName evidence="3">30S ribosomal protein S14</fullName>
    </alternativeName>
</protein>
<comment type="function">
    <text evidence="1">Binds 16S rRNA, required for the assembly of 30S particles and may also be responsible for determining the conformation of the 16S rRNA at the A site.</text>
</comment>
<comment type="subunit">
    <text evidence="1">Part of the 30S ribosomal subunit. Contacts proteins S3 and S10.</text>
</comment>
<comment type="similarity">
    <text evidence="1">Belongs to the universal ribosomal protein uS14 family.</text>
</comment>
<gene>
    <name evidence="1" type="primary">rpsN</name>
    <name type="ordered locus">Mflv_1310</name>
</gene>
<proteinExistence type="inferred from homology"/>